<protein>
    <recommendedName>
        <fullName>Thioredoxin reductase</fullName>
        <ecNumber>1.8.1.9</ecNumber>
    </recommendedName>
</protein>
<keyword id="KW-0963">Cytoplasm</keyword>
<keyword id="KW-1015">Disulfide bond</keyword>
<keyword id="KW-0274">FAD</keyword>
<keyword id="KW-0285">Flavoprotein</keyword>
<keyword id="KW-0521">NADP</keyword>
<keyword id="KW-0560">Oxidoreductase</keyword>
<keyword id="KW-0676">Redox-active center</keyword>
<reference key="1">
    <citation type="journal article" date="2003" name="Gene">
        <title>Characterization of thioredoxin reductase genes (trr1) from Pneumocystis carinii and Pneumocystis jiroveci.</title>
        <authorList>
            <person name="Kutty G.K."/>
            <person name="Huang S.N."/>
            <person name="Kovacs J.A."/>
        </authorList>
    </citation>
    <scope>NUCLEOTIDE SEQUENCE [GENOMIC DNA / MRNA]</scope>
</reference>
<name>TRXB_PNEJI</name>
<dbReference type="EC" id="1.8.1.9"/>
<dbReference type="EMBL" id="AY130996">
    <property type="protein sequence ID" value="AAN12366.1"/>
    <property type="molecule type" value="Genomic_DNA"/>
</dbReference>
<dbReference type="EMBL" id="AF532986">
    <property type="protein sequence ID" value="AAP72145.1"/>
    <property type="molecule type" value="mRNA"/>
</dbReference>
<dbReference type="SMR" id="Q8J0U0"/>
<dbReference type="VEuPathDB" id="FungiDB:T551_03486"/>
<dbReference type="GO" id="GO:0005737">
    <property type="term" value="C:cytoplasm"/>
    <property type="evidence" value="ECO:0007669"/>
    <property type="project" value="UniProtKB-SubCell"/>
</dbReference>
<dbReference type="GO" id="GO:0004791">
    <property type="term" value="F:thioredoxin-disulfide reductase (NADPH) activity"/>
    <property type="evidence" value="ECO:0007669"/>
    <property type="project" value="UniProtKB-EC"/>
</dbReference>
<dbReference type="GO" id="GO:0019430">
    <property type="term" value="P:removal of superoxide radicals"/>
    <property type="evidence" value="ECO:0007669"/>
    <property type="project" value="InterPro"/>
</dbReference>
<dbReference type="FunFam" id="3.50.50.60:FF:000064">
    <property type="entry name" value="Thioredoxin reductase"/>
    <property type="match status" value="1"/>
</dbReference>
<dbReference type="Gene3D" id="3.50.50.60">
    <property type="entry name" value="FAD/NAD(P)-binding domain"/>
    <property type="match status" value="2"/>
</dbReference>
<dbReference type="InterPro" id="IPR036188">
    <property type="entry name" value="FAD/NAD-bd_sf"/>
</dbReference>
<dbReference type="InterPro" id="IPR023753">
    <property type="entry name" value="FAD/NAD-binding_dom"/>
</dbReference>
<dbReference type="InterPro" id="IPR050097">
    <property type="entry name" value="Ferredoxin-NADP_redctase_2"/>
</dbReference>
<dbReference type="InterPro" id="IPR008255">
    <property type="entry name" value="Pyr_nucl-diS_OxRdtase_2_AS"/>
</dbReference>
<dbReference type="InterPro" id="IPR005982">
    <property type="entry name" value="Thioredox_Rdtase"/>
</dbReference>
<dbReference type="NCBIfam" id="TIGR01292">
    <property type="entry name" value="TRX_reduct"/>
    <property type="match status" value="1"/>
</dbReference>
<dbReference type="PANTHER" id="PTHR48105">
    <property type="entry name" value="THIOREDOXIN REDUCTASE 1-RELATED-RELATED"/>
    <property type="match status" value="1"/>
</dbReference>
<dbReference type="Pfam" id="PF07992">
    <property type="entry name" value="Pyr_redox_2"/>
    <property type="match status" value="1"/>
</dbReference>
<dbReference type="PRINTS" id="PR00368">
    <property type="entry name" value="FADPNR"/>
</dbReference>
<dbReference type="PRINTS" id="PR00469">
    <property type="entry name" value="PNDRDTASEII"/>
</dbReference>
<dbReference type="SUPFAM" id="SSF51905">
    <property type="entry name" value="FAD/NAD(P)-binding domain"/>
    <property type="match status" value="1"/>
</dbReference>
<dbReference type="PROSITE" id="PS00573">
    <property type="entry name" value="PYRIDINE_REDOX_2"/>
    <property type="match status" value="1"/>
</dbReference>
<accession>Q8J0U0</accession>
<feature type="chain" id="PRO_0000166767" description="Thioredoxin reductase">
    <location>
        <begin position="1"/>
        <end position="327"/>
    </location>
</feature>
<feature type="binding site" evidence="1">
    <location>
        <begin position="10"/>
        <end position="13"/>
    </location>
    <ligand>
        <name>FAD</name>
        <dbReference type="ChEBI" id="CHEBI:57692"/>
    </ligand>
</feature>
<feature type="binding site" evidence="1">
    <location>
        <begin position="39"/>
        <end position="40"/>
    </location>
    <ligand>
        <name>FAD</name>
        <dbReference type="ChEBI" id="CHEBI:57692"/>
    </ligand>
</feature>
<feature type="binding site" evidence="1">
    <location>
        <position position="44"/>
    </location>
    <ligand>
        <name>FAD</name>
        <dbReference type="ChEBI" id="CHEBI:57692"/>
    </ligand>
</feature>
<feature type="binding site" evidence="1">
    <location>
        <position position="53"/>
    </location>
    <ligand>
        <name>FAD</name>
        <dbReference type="ChEBI" id="CHEBI:57692"/>
    </ligand>
</feature>
<feature type="binding site" evidence="1">
    <location>
        <position position="86"/>
    </location>
    <ligand>
        <name>FAD</name>
        <dbReference type="ChEBI" id="CHEBI:57692"/>
    </ligand>
</feature>
<feature type="binding site" evidence="1">
    <location>
        <position position="143"/>
    </location>
    <ligand>
        <name>FAD</name>
        <dbReference type="ChEBI" id="CHEBI:57692"/>
    </ligand>
</feature>
<feature type="binding site" evidence="1">
    <location>
        <position position="286"/>
    </location>
    <ligand>
        <name>FAD</name>
        <dbReference type="ChEBI" id="CHEBI:57692"/>
    </ligand>
</feature>
<feature type="binding site" evidence="1">
    <location>
        <begin position="293"/>
        <end position="295"/>
    </location>
    <ligand>
        <name>FAD</name>
        <dbReference type="ChEBI" id="CHEBI:57692"/>
    </ligand>
</feature>
<feature type="disulfide bond" description="Redox-active" evidence="1">
    <location>
        <begin position="140"/>
        <end position="143"/>
    </location>
</feature>
<organism>
    <name type="scientific">Pneumocystis jirovecii</name>
    <name type="common">Human pneumocystis pneumonia agent</name>
    <dbReference type="NCBI Taxonomy" id="42068"/>
    <lineage>
        <taxon>Eukaryota</taxon>
        <taxon>Fungi</taxon>
        <taxon>Dikarya</taxon>
        <taxon>Ascomycota</taxon>
        <taxon>Taphrinomycotina</taxon>
        <taxon>Pneumocystomycetes</taxon>
        <taxon>Pneumocystaceae</taxon>
        <taxon>Pneumocystis</taxon>
    </lineage>
</organism>
<comment type="function">
    <text>Component of the thioredoxin-thioredoxin reductase system which may be involved in biosynthesis of penicillins and cephalosporins and may be important in determining the thiol-disulfide redox balance.</text>
</comment>
<comment type="catalytic activity">
    <reaction>
        <text>[thioredoxin]-dithiol + NADP(+) = [thioredoxin]-disulfide + NADPH + H(+)</text>
        <dbReference type="Rhea" id="RHEA:20345"/>
        <dbReference type="Rhea" id="RHEA-COMP:10698"/>
        <dbReference type="Rhea" id="RHEA-COMP:10700"/>
        <dbReference type="ChEBI" id="CHEBI:15378"/>
        <dbReference type="ChEBI" id="CHEBI:29950"/>
        <dbReference type="ChEBI" id="CHEBI:50058"/>
        <dbReference type="ChEBI" id="CHEBI:57783"/>
        <dbReference type="ChEBI" id="CHEBI:58349"/>
        <dbReference type="EC" id="1.8.1.9"/>
    </reaction>
</comment>
<comment type="cofactor">
    <cofactor evidence="1">
        <name>FAD</name>
        <dbReference type="ChEBI" id="CHEBI:57692"/>
    </cofactor>
    <text evidence="1">Binds 1 FAD per subunit.</text>
</comment>
<comment type="subunit">
    <text evidence="1">Homodimer.</text>
</comment>
<comment type="subcellular location">
    <subcellularLocation>
        <location evidence="1">Cytoplasm</location>
    </subcellularLocation>
</comment>
<comment type="miscellaneous">
    <text>The active site is a redox-active disulfide bond.</text>
</comment>
<comment type="similarity">
    <text evidence="2">Belongs to the class-II pyridine nucleotide-disulfide oxidoreductase family.</text>
</comment>
<gene>
    <name type="primary">TRR1</name>
</gene>
<sequence>MHSKVIIIGSGPAGHTAAIYLARAELKPVLYEGMLANGIAAGGQLTTTTDVENYPGFPDGIMGPLLMEKFREQSVKYGTCIITETVSKLDLSKRPFKYWCESDENTCHTADVVVMATGAYARRLHIPGEETYWQRGISACAVCDGAAPIFRGKCLSVVGGGDSAAEESLFLTRYATKVYLLVRRDKLRASAVMAKRLLNHPKIEVIWNTVVLRSLGDGHLLNRLEIKNVKTQVVSELHVSGLFYAIGHEPATALVRGQVECDDNGYIITKNGGPETNIKGFFAAGDVQDKKWRQAVTSAGSGCMAGLAAERLLAEEEEMKNIEKNKK</sequence>
<proteinExistence type="evidence at transcript level"/>
<evidence type="ECO:0000250" key="1">
    <source>
        <dbReference type="UniProtKB" id="P29509"/>
    </source>
</evidence>
<evidence type="ECO:0000305" key="2"/>